<sequence>MQRARPTLWAAALTLLVLLRGPPVARAGASSAGLGPVVRCEPCDARALAQCAPPPAVCAELVREPGCGCCLTCALSEGQPCGIYTERCGSGLRCQPSPDEARPLQALLDGRGLCVNASAVSRLRAYLLPAPPAPGNASESEEDRSAGSVESPSVSSTHRVSDPKFHPLHSKIIIIKKGHAKDSQRYKVDYESQSTDTQNFSSESKRETEYGPCRREMEDTLNHLKFLNVLSPRGVHIPNCDKKGFYKKKQCRPSKGRKRGFCWCVDKYGQPLPGYTTKGKEDVHCYSMQSK</sequence>
<gene>
    <name type="primary">IGFBP3</name>
    <name type="synonym">IBP3</name>
</gene>
<organism>
    <name type="scientific">Homo sapiens</name>
    <name type="common">Human</name>
    <dbReference type="NCBI Taxonomy" id="9606"/>
    <lineage>
        <taxon>Eukaryota</taxon>
        <taxon>Metazoa</taxon>
        <taxon>Chordata</taxon>
        <taxon>Craniata</taxon>
        <taxon>Vertebrata</taxon>
        <taxon>Euteleostomi</taxon>
        <taxon>Mammalia</taxon>
        <taxon>Eutheria</taxon>
        <taxon>Euarchontoglires</taxon>
        <taxon>Primates</taxon>
        <taxon>Haplorrhini</taxon>
        <taxon>Catarrhini</taxon>
        <taxon>Hominidae</taxon>
        <taxon>Homo</taxon>
    </lineage>
</organism>
<dbReference type="EMBL" id="M31159">
    <property type="protein sequence ID" value="AAA52541.1"/>
    <property type="molecule type" value="mRNA"/>
</dbReference>
<dbReference type="EMBL" id="M35878">
    <property type="protein sequence ID" value="AAA52706.1"/>
    <property type="molecule type" value="Genomic_DNA"/>
</dbReference>
<dbReference type="EMBL" id="X64875">
    <property type="protein sequence ID" value="CAA46087.1"/>
    <property type="molecule type" value="mRNA"/>
</dbReference>
<dbReference type="EMBL" id="DQ301819">
    <property type="protein sequence ID" value="ABB96247.1"/>
    <property type="molecule type" value="Genomic_DNA"/>
</dbReference>
<dbReference type="EMBL" id="AC091524">
    <property type="protein sequence ID" value="AAS07554.1"/>
    <property type="molecule type" value="Genomic_DNA"/>
</dbReference>
<dbReference type="EMBL" id="CH236958">
    <property type="protein sequence ID" value="EAL23801.1"/>
    <property type="molecule type" value="Genomic_DNA"/>
</dbReference>
<dbReference type="EMBL" id="CH471128">
    <property type="protein sequence ID" value="EAW61028.1"/>
    <property type="molecule type" value="Genomic_DNA"/>
</dbReference>
<dbReference type="EMBL" id="CH471128">
    <property type="protein sequence ID" value="EAW61029.1"/>
    <property type="molecule type" value="Genomic_DNA"/>
</dbReference>
<dbReference type="EMBL" id="BC000013">
    <property type="protein sequence ID" value="AAH00013.1"/>
    <property type="molecule type" value="mRNA"/>
</dbReference>
<dbReference type="EMBL" id="BC018962">
    <property type="protein sequence ID" value="AAH18962.1"/>
    <property type="molecule type" value="mRNA"/>
</dbReference>
<dbReference type="EMBL" id="BC064987">
    <property type="protein sequence ID" value="AAH64987.1"/>
    <property type="molecule type" value="mRNA"/>
</dbReference>
<dbReference type="CCDS" id="CCDS34632.1">
    <molecule id="P17936-2"/>
</dbReference>
<dbReference type="CCDS" id="CCDS5505.1">
    <molecule id="P17936-1"/>
</dbReference>
<dbReference type="PIR" id="A36578">
    <property type="entry name" value="IOHU3"/>
</dbReference>
<dbReference type="RefSeq" id="NP_000589.2">
    <molecule id="P17936-1"/>
    <property type="nucleotide sequence ID" value="NM_000598.5"/>
</dbReference>
<dbReference type="RefSeq" id="NP_001013416.1">
    <molecule id="P17936-2"/>
    <property type="nucleotide sequence ID" value="NM_001013398.2"/>
</dbReference>
<dbReference type="RefSeq" id="XP_016867641.1">
    <property type="nucleotide sequence ID" value="XM_017012152.1"/>
</dbReference>
<dbReference type="RefSeq" id="XP_047276281.1">
    <molecule id="P17936-1"/>
    <property type="nucleotide sequence ID" value="XM_047420325.1"/>
</dbReference>
<dbReference type="PDB" id="7WRQ">
    <property type="method" value="EM"/>
    <property type="resolution" value="3.60 A"/>
    <property type="chains" value="B=28-291"/>
</dbReference>
<dbReference type="PDBsum" id="7WRQ"/>
<dbReference type="EMDB" id="EMD-32735"/>
<dbReference type="SMR" id="P17936"/>
<dbReference type="BioGRID" id="109707">
    <property type="interactions" value="58"/>
</dbReference>
<dbReference type="CORUM" id="P17936"/>
<dbReference type="DIP" id="DIP-40786N"/>
<dbReference type="FunCoup" id="P17936">
    <property type="interactions" value="279"/>
</dbReference>
<dbReference type="IntAct" id="P17936">
    <property type="interactions" value="38"/>
</dbReference>
<dbReference type="MINT" id="P17936"/>
<dbReference type="STRING" id="9606.ENSP00000370473"/>
<dbReference type="BindingDB" id="P17936"/>
<dbReference type="ChEMBL" id="CHEMBL3997"/>
<dbReference type="DrugBank" id="DB00523">
    <property type="generic name" value="Alitretinoin"/>
</dbReference>
<dbReference type="DrugBank" id="DB01277">
    <property type="generic name" value="Mecasermin"/>
</dbReference>
<dbReference type="MEROPS" id="I31.952"/>
<dbReference type="GlyConnect" id="1945">
    <property type="glycosylation" value="6 N-Linked glycans (3 sites)"/>
</dbReference>
<dbReference type="GlyCosmos" id="P17936">
    <property type="glycosylation" value="5 sites, 10 glycans"/>
</dbReference>
<dbReference type="GlyGen" id="P17936">
    <property type="glycosylation" value="14 sites, 24 N-linked glycans (3 sites), 4 O-linked glycans (11 sites)"/>
</dbReference>
<dbReference type="iPTMnet" id="P17936"/>
<dbReference type="PhosphoSitePlus" id="P17936"/>
<dbReference type="BioMuta" id="IGFBP3"/>
<dbReference type="DMDM" id="146327827"/>
<dbReference type="jPOST" id="P17936"/>
<dbReference type="MassIVE" id="P17936"/>
<dbReference type="PaxDb" id="9606-ENSP00000370473"/>
<dbReference type="PeptideAtlas" id="P17936"/>
<dbReference type="ProteomicsDB" id="53527">
    <molecule id="P17936-1"/>
</dbReference>
<dbReference type="Antibodypedia" id="872">
    <property type="antibodies" value="754 antibodies from 44 providers"/>
</dbReference>
<dbReference type="DNASU" id="3486"/>
<dbReference type="Ensembl" id="ENST00000381083.9">
    <molecule id="P17936-2"/>
    <property type="protein sequence ID" value="ENSP00000370473.4"/>
    <property type="gene ID" value="ENSG00000146674.16"/>
</dbReference>
<dbReference type="Ensembl" id="ENST00000613132.5">
    <molecule id="P17936-1"/>
    <property type="protein sequence ID" value="ENSP00000477772.2"/>
    <property type="gene ID" value="ENSG00000146674.16"/>
</dbReference>
<dbReference type="GeneID" id="3486"/>
<dbReference type="KEGG" id="hsa:3486"/>
<dbReference type="MANE-Select" id="ENST00000613132.5">
    <property type="protein sequence ID" value="ENSP00000477772.2"/>
    <property type="RefSeq nucleotide sequence ID" value="NM_000598.5"/>
    <property type="RefSeq protein sequence ID" value="NP_000589.2"/>
</dbReference>
<dbReference type="UCSC" id="uc003tnr.4">
    <molecule id="P17936-1"/>
    <property type="organism name" value="human"/>
</dbReference>
<dbReference type="AGR" id="HGNC:5472"/>
<dbReference type="CTD" id="3486"/>
<dbReference type="DisGeNET" id="3486"/>
<dbReference type="GeneCards" id="IGFBP3"/>
<dbReference type="HGNC" id="HGNC:5472">
    <property type="gene designation" value="IGFBP3"/>
</dbReference>
<dbReference type="HPA" id="ENSG00000146674">
    <property type="expression patterns" value="Tissue enhanced (liver, placenta)"/>
</dbReference>
<dbReference type="MIM" id="146732">
    <property type="type" value="gene"/>
</dbReference>
<dbReference type="neXtProt" id="NX_P17936"/>
<dbReference type="OpenTargets" id="ENSG00000146674"/>
<dbReference type="PharmGKB" id="PA29705"/>
<dbReference type="VEuPathDB" id="HostDB:ENSG00000146674"/>
<dbReference type="eggNOG" id="ENOG502QWC0">
    <property type="taxonomic scope" value="Eukaryota"/>
</dbReference>
<dbReference type="GeneTree" id="ENSGT00940000158092"/>
<dbReference type="InParanoid" id="P17936"/>
<dbReference type="OMA" id="CKPLVPD"/>
<dbReference type="OrthoDB" id="6068400at2759"/>
<dbReference type="PAN-GO" id="P17936">
    <property type="GO annotations" value="5 GO annotations based on evolutionary models"/>
</dbReference>
<dbReference type="PhylomeDB" id="P17936"/>
<dbReference type="TreeFam" id="TF331211"/>
<dbReference type="PathwayCommons" id="P17936"/>
<dbReference type="Reactome" id="R-HSA-381426">
    <property type="pathway name" value="Regulation of Insulin-like Growth Factor (IGF) transport and uptake by Insulin-like Growth Factor Binding Proteins (IGFBPs)"/>
</dbReference>
<dbReference type="Reactome" id="R-HSA-6803211">
    <property type="pathway name" value="TP53 Regulates Transcription of Death Receptors and Ligands"/>
</dbReference>
<dbReference type="Reactome" id="R-HSA-8957275">
    <property type="pathway name" value="Post-translational protein phosphorylation"/>
</dbReference>
<dbReference type="SignaLink" id="P17936"/>
<dbReference type="SIGNOR" id="P17936"/>
<dbReference type="BioGRID-ORCS" id="3486">
    <property type="hits" value="13 hits in 1154 CRISPR screens"/>
</dbReference>
<dbReference type="ChiTaRS" id="IGFBP3">
    <property type="organism name" value="human"/>
</dbReference>
<dbReference type="GeneWiki" id="IGFBP3"/>
<dbReference type="GenomeRNAi" id="3486"/>
<dbReference type="Pharos" id="P17936">
    <property type="development level" value="Tchem"/>
</dbReference>
<dbReference type="PRO" id="PR:P17936"/>
<dbReference type="Proteomes" id="UP000005640">
    <property type="component" value="Chromosome 7"/>
</dbReference>
<dbReference type="RNAct" id="P17936">
    <property type="molecule type" value="protein"/>
</dbReference>
<dbReference type="Bgee" id="ENSG00000146674">
    <property type="expression patterns" value="Expressed in decidua and 200 other cell types or tissues"/>
</dbReference>
<dbReference type="ExpressionAtlas" id="P17936">
    <property type="expression patterns" value="baseline and differential"/>
</dbReference>
<dbReference type="GO" id="GO:0005788">
    <property type="term" value="C:endoplasmic reticulum lumen"/>
    <property type="evidence" value="ECO:0000304"/>
    <property type="project" value="Reactome"/>
</dbReference>
<dbReference type="GO" id="GO:0005576">
    <property type="term" value="C:extracellular region"/>
    <property type="evidence" value="ECO:0000304"/>
    <property type="project" value="Reactome"/>
</dbReference>
<dbReference type="GO" id="GO:0005615">
    <property type="term" value="C:extracellular space"/>
    <property type="evidence" value="ECO:0000314"/>
    <property type="project" value="BHF-UCL"/>
</dbReference>
<dbReference type="GO" id="GO:0016942">
    <property type="term" value="C:insulin-like growth factor binding protein complex"/>
    <property type="evidence" value="ECO:0000305"/>
    <property type="project" value="BHF-UCL"/>
</dbReference>
<dbReference type="GO" id="GO:0042567">
    <property type="term" value="C:insulin-like growth factor ternary complex"/>
    <property type="evidence" value="ECO:0000314"/>
    <property type="project" value="BHF-UCL"/>
</dbReference>
<dbReference type="GO" id="GO:0005634">
    <property type="term" value="C:nucleus"/>
    <property type="evidence" value="ECO:0000314"/>
    <property type="project" value="MGI"/>
</dbReference>
<dbReference type="GO" id="GO:0001968">
    <property type="term" value="F:fibronectin binding"/>
    <property type="evidence" value="ECO:0000318"/>
    <property type="project" value="GO_Central"/>
</dbReference>
<dbReference type="GO" id="GO:0005520">
    <property type="term" value="F:insulin-like growth factor binding"/>
    <property type="evidence" value="ECO:0000303"/>
    <property type="project" value="UniProtKB"/>
</dbReference>
<dbReference type="GO" id="GO:0031994">
    <property type="term" value="F:insulin-like growth factor I binding"/>
    <property type="evidence" value="ECO:0000353"/>
    <property type="project" value="BHF-UCL"/>
</dbReference>
<dbReference type="GO" id="GO:0031995">
    <property type="term" value="F:insulin-like growth factor II binding"/>
    <property type="evidence" value="ECO:0000318"/>
    <property type="project" value="GO_Central"/>
</dbReference>
<dbReference type="GO" id="GO:0046872">
    <property type="term" value="F:metal ion binding"/>
    <property type="evidence" value="ECO:0000303"/>
    <property type="project" value="UniProtKB"/>
</dbReference>
<dbReference type="GO" id="GO:0008160">
    <property type="term" value="F:protein tyrosine phosphatase activator activity"/>
    <property type="evidence" value="ECO:0000314"/>
    <property type="project" value="UniProtKB"/>
</dbReference>
<dbReference type="GO" id="GO:0006915">
    <property type="term" value="P:apoptotic process"/>
    <property type="evidence" value="ECO:0007669"/>
    <property type="project" value="UniProtKB-KW"/>
</dbReference>
<dbReference type="GO" id="GO:0000165">
    <property type="term" value="P:MAPK cascade"/>
    <property type="evidence" value="ECO:0007669"/>
    <property type="project" value="Ensembl"/>
</dbReference>
<dbReference type="GO" id="GO:0008285">
    <property type="term" value="P:negative regulation of cell population proliferation"/>
    <property type="evidence" value="ECO:0000316"/>
    <property type="project" value="MGI"/>
</dbReference>
<dbReference type="GO" id="GO:0001933">
    <property type="term" value="P:negative regulation of protein phosphorylation"/>
    <property type="evidence" value="ECO:0000314"/>
    <property type="project" value="MGI"/>
</dbReference>
<dbReference type="GO" id="GO:0009968">
    <property type="term" value="P:negative regulation of signal transduction"/>
    <property type="evidence" value="ECO:0000303"/>
    <property type="project" value="UniProtKB"/>
</dbReference>
<dbReference type="GO" id="GO:0014912">
    <property type="term" value="P:negative regulation of smooth muscle cell migration"/>
    <property type="evidence" value="ECO:0000314"/>
    <property type="project" value="BHF-UCL"/>
</dbReference>
<dbReference type="GO" id="GO:0048662">
    <property type="term" value="P:negative regulation of smooth muscle cell proliferation"/>
    <property type="evidence" value="ECO:0000314"/>
    <property type="project" value="BHF-UCL"/>
</dbReference>
<dbReference type="GO" id="GO:0001649">
    <property type="term" value="P:osteoblast differentiation"/>
    <property type="evidence" value="ECO:0007669"/>
    <property type="project" value="Ensembl"/>
</dbReference>
<dbReference type="GO" id="GO:0043065">
    <property type="term" value="P:positive regulation of apoptotic process"/>
    <property type="evidence" value="ECO:0000315"/>
    <property type="project" value="UniProtKB"/>
</dbReference>
<dbReference type="GO" id="GO:0043568">
    <property type="term" value="P:positive regulation of insulin-like growth factor receptor signaling pathway"/>
    <property type="evidence" value="ECO:0007669"/>
    <property type="project" value="Ensembl"/>
</dbReference>
<dbReference type="GO" id="GO:0043410">
    <property type="term" value="P:positive regulation of MAPK cascade"/>
    <property type="evidence" value="ECO:0007669"/>
    <property type="project" value="Ensembl"/>
</dbReference>
<dbReference type="GO" id="GO:0045663">
    <property type="term" value="P:positive regulation of myoblast differentiation"/>
    <property type="evidence" value="ECO:0000314"/>
    <property type="project" value="UniProtKB"/>
</dbReference>
<dbReference type="GO" id="GO:0006468">
    <property type="term" value="P:protein phosphorylation"/>
    <property type="evidence" value="ECO:0000314"/>
    <property type="project" value="MGI"/>
</dbReference>
<dbReference type="GO" id="GO:0001558">
    <property type="term" value="P:regulation of cell growth"/>
    <property type="evidence" value="ECO:0007669"/>
    <property type="project" value="Ensembl"/>
</dbReference>
<dbReference type="GO" id="GO:0010906">
    <property type="term" value="P:regulation of glucose metabolic process"/>
    <property type="evidence" value="ECO:0007669"/>
    <property type="project" value="Ensembl"/>
</dbReference>
<dbReference type="GO" id="GO:0043567">
    <property type="term" value="P:regulation of insulin-like growth factor receptor signaling pathway"/>
    <property type="evidence" value="ECO:0000318"/>
    <property type="project" value="GO_Central"/>
</dbReference>
<dbReference type="GO" id="GO:0044342">
    <property type="term" value="P:type B pancreatic cell proliferation"/>
    <property type="evidence" value="ECO:0007669"/>
    <property type="project" value="Ensembl"/>
</dbReference>
<dbReference type="CDD" id="cd00191">
    <property type="entry name" value="TY"/>
    <property type="match status" value="1"/>
</dbReference>
<dbReference type="FunFam" id="4.10.40.20:FF:000001">
    <property type="entry name" value="Insulin-like growth factor binding protein 5"/>
    <property type="match status" value="1"/>
</dbReference>
<dbReference type="FunFam" id="4.10.800.10:FF:000005">
    <property type="entry name" value="Putative insulin-like growth factor-binding protein 5"/>
    <property type="match status" value="1"/>
</dbReference>
<dbReference type="Gene3D" id="4.10.40.20">
    <property type="match status" value="1"/>
</dbReference>
<dbReference type="Gene3D" id="4.10.800.10">
    <property type="entry name" value="Thyroglobulin type-1"/>
    <property type="match status" value="1"/>
</dbReference>
<dbReference type="InterPro" id="IPR009030">
    <property type="entry name" value="Growth_fac_rcpt_cys_sf"/>
</dbReference>
<dbReference type="InterPro" id="IPR012211">
    <property type="entry name" value="IGFBP-3"/>
</dbReference>
<dbReference type="InterPro" id="IPR000867">
    <property type="entry name" value="IGFBP-like"/>
</dbReference>
<dbReference type="InterPro" id="IPR022321">
    <property type="entry name" value="IGFBP_1-6_chordata"/>
</dbReference>
<dbReference type="InterPro" id="IPR017891">
    <property type="entry name" value="Insulin_GF-bd_Cys-rich_CS"/>
</dbReference>
<dbReference type="InterPro" id="IPR000716">
    <property type="entry name" value="Thyroglobulin_1"/>
</dbReference>
<dbReference type="InterPro" id="IPR036857">
    <property type="entry name" value="Thyroglobulin_1_sf"/>
</dbReference>
<dbReference type="PANTHER" id="PTHR11551">
    <property type="entry name" value="INSULIN-LIKE GROWTH FACTOR BINDING PROTEIN"/>
    <property type="match status" value="1"/>
</dbReference>
<dbReference type="PANTHER" id="PTHR11551:SF3">
    <property type="entry name" value="INSULIN-LIKE GROWTH FACTOR-BINDING PROTEIN 3"/>
    <property type="match status" value="1"/>
</dbReference>
<dbReference type="Pfam" id="PF00219">
    <property type="entry name" value="IGFBP"/>
    <property type="match status" value="1"/>
</dbReference>
<dbReference type="Pfam" id="PF00086">
    <property type="entry name" value="Thyroglobulin_1"/>
    <property type="match status" value="1"/>
</dbReference>
<dbReference type="PRINTS" id="PR01976">
    <property type="entry name" value="IGFBPFAMILY"/>
</dbReference>
<dbReference type="PRINTS" id="PR01979">
    <property type="entry name" value="IGFBPFAMILY3"/>
</dbReference>
<dbReference type="SMART" id="SM00121">
    <property type="entry name" value="IB"/>
    <property type="match status" value="1"/>
</dbReference>
<dbReference type="SMART" id="SM00211">
    <property type="entry name" value="TY"/>
    <property type="match status" value="1"/>
</dbReference>
<dbReference type="SUPFAM" id="SSF57184">
    <property type="entry name" value="Growth factor receptor domain"/>
    <property type="match status" value="1"/>
</dbReference>
<dbReference type="SUPFAM" id="SSF57610">
    <property type="entry name" value="Thyroglobulin type-1 domain"/>
    <property type="match status" value="1"/>
</dbReference>
<dbReference type="PROSITE" id="PS00222">
    <property type="entry name" value="IGFBP_N_1"/>
    <property type="match status" value="1"/>
</dbReference>
<dbReference type="PROSITE" id="PS51323">
    <property type="entry name" value="IGFBP_N_2"/>
    <property type="match status" value="1"/>
</dbReference>
<dbReference type="PROSITE" id="PS00484">
    <property type="entry name" value="THYROGLOBULIN_1_1"/>
    <property type="match status" value="1"/>
</dbReference>
<dbReference type="PROSITE" id="PS51162">
    <property type="entry name" value="THYROGLOBULIN_1_2"/>
    <property type="match status" value="1"/>
</dbReference>
<keyword id="KW-0002">3D-structure</keyword>
<keyword id="KW-0025">Alternative splicing</keyword>
<keyword id="KW-0053">Apoptosis</keyword>
<keyword id="KW-0903">Direct protein sequencing</keyword>
<keyword id="KW-1015">Disulfide bond</keyword>
<keyword id="KW-0325">Glycoprotein</keyword>
<keyword id="KW-0340">Growth factor binding</keyword>
<keyword id="KW-0539">Nucleus</keyword>
<keyword id="KW-0597">Phosphoprotein</keyword>
<keyword id="KW-1267">Proteomics identification</keyword>
<keyword id="KW-1185">Reference proteome</keyword>
<keyword id="KW-0964">Secreted</keyword>
<keyword id="KW-0732">Signal</keyword>
<evidence type="ECO:0000250" key="1"/>
<evidence type="ECO:0000255" key="2"/>
<evidence type="ECO:0000255" key="3">
    <source>
        <dbReference type="PROSITE-ProRule" id="PRU00500"/>
    </source>
</evidence>
<evidence type="ECO:0000255" key="4">
    <source>
        <dbReference type="PROSITE-ProRule" id="PRU00653"/>
    </source>
</evidence>
<evidence type="ECO:0000256" key="5">
    <source>
        <dbReference type="SAM" id="MobiDB-lite"/>
    </source>
</evidence>
<evidence type="ECO:0000269" key="6">
    <source>
    </source>
</evidence>
<evidence type="ECO:0000269" key="7">
    <source>
    </source>
</evidence>
<evidence type="ECO:0000269" key="8">
    <source>
    </source>
</evidence>
<evidence type="ECO:0000269" key="9">
    <source>
    </source>
</evidence>
<evidence type="ECO:0000269" key="10">
    <source>
    </source>
</evidence>
<evidence type="ECO:0000269" key="11">
    <source>
    </source>
</evidence>
<evidence type="ECO:0000269" key="12">
    <source>
    </source>
</evidence>
<evidence type="ECO:0000269" key="13">
    <source>
    </source>
</evidence>
<evidence type="ECO:0000269" key="14">
    <source>
    </source>
</evidence>
<evidence type="ECO:0000269" key="15">
    <source>
    </source>
</evidence>
<evidence type="ECO:0000269" key="16">
    <source>
    </source>
</evidence>
<evidence type="ECO:0000269" key="17">
    <source>
    </source>
</evidence>
<evidence type="ECO:0000269" key="18">
    <source>
    </source>
</evidence>
<evidence type="ECO:0000269" key="19">
    <source>
    </source>
</evidence>
<evidence type="ECO:0000269" key="20">
    <source>
    </source>
</evidence>
<evidence type="ECO:0000269" key="21">
    <source>
    </source>
</evidence>
<evidence type="ECO:0000269" key="22">
    <source>
    </source>
</evidence>
<evidence type="ECO:0000269" key="23">
    <source>
    </source>
</evidence>
<evidence type="ECO:0000269" key="24">
    <source>
    </source>
</evidence>
<evidence type="ECO:0000269" key="25">
    <source>
    </source>
</evidence>
<evidence type="ECO:0000269" key="26">
    <source>
    </source>
</evidence>
<evidence type="ECO:0000269" key="27">
    <source ref="4"/>
</evidence>
<evidence type="ECO:0000305" key="28"/>
<evidence type="ECO:0007744" key="29">
    <source>
        <dbReference type="PDB" id="7WRQ"/>
    </source>
</evidence>
<reference key="1">
    <citation type="journal article" date="1988" name="Mol. Endocrinol.">
        <title>Cloning and expression of the growth hormone-dependent insulin-like growth factor-binding protein.</title>
        <authorList>
            <person name="Wood W.I."/>
            <person name="Cachianes G."/>
            <person name="Henzel W.J."/>
            <person name="Winslow G.A."/>
            <person name="Spencer S.A."/>
            <person name="Hellmiss R."/>
            <person name="Martin J.L."/>
            <person name="Baxter R.C."/>
        </authorList>
    </citation>
    <scope>NUCLEOTIDE SEQUENCE [MRNA] (ISOFORM 1)</scope>
    <scope>VARIANT GLY-32</scope>
</reference>
<reference key="2">
    <citation type="journal article" date="1990" name="J. Biol. Chem.">
        <title>Insulin-like growth factor binding protein-3. Organization of the human chromosomal gene and demonstration of promoter activity.</title>
        <authorList>
            <person name="Cubbage M.L."/>
            <person name="Suwanichkul A."/>
            <person name="Powell D.R."/>
        </authorList>
    </citation>
    <scope>NUCLEOTIDE SEQUENCE [GENOMIC DNA] (ISOFORM 1)</scope>
    <scope>VARIANT GLY-32</scope>
</reference>
<reference key="3">
    <citation type="journal article" date="1993" name="DNA Seq.">
        <title>Analysis of the primary structure of insulin-like growth factor binding protein-3 cDNA from Werner syndrome fibroblasts.</title>
        <authorList>
            <person name="Thweatt R."/>
            <person name="Fleischmann R."/>
            <person name="Goldstein S."/>
        </authorList>
    </citation>
    <scope>NUCLEOTIDE SEQUENCE [MRNA] (ISOFORM 1)</scope>
    <scope>VARIANT GLY-32</scope>
    <source>
        <tissue>Skin</tissue>
    </source>
</reference>
<reference key="4">
    <citation type="submission" date="2005-11" db="EMBL/GenBank/DDBJ databases">
        <authorList>
            <consortium name="NIEHS SNPs program"/>
        </authorList>
    </citation>
    <scope>NUCLEOTIDE SEQUENCE [GENOMIC DNA] (ISOFORM 2)</scope>
    <scope>VARIANTS THR-56 AND SER-234</scope>
</reference>
<reference key="5">
    <citation type="journal article" date="2003" name="Nature">
        <title>The DNA sequence of human chromosome 7.</title>
        <authorList>
            <person name="Hillier L.W."/>
            <person name="Fulton R.S."/>
            <person name="Fulton L.A."/>
            <person name="Graves T.A."/>
            <person name="Pepin K.H."/>
            <person name="Wagner-McPherson C."/>
            <person name="Layman D."/>
            <person name="Maas J."/>
            <person name="Jaeger S."/>
            <person name="Walker R."/>
            <person name="Wylie K."/>
            <person name="Sekhon M."/>
            <person name="Becker M.C."/>
            <person name="O'Laughlin M.D."/>
            <person name="Schaller M.E."/>
            <person name="Fewell G.A."/>
            <person name="Delehaunty K.D."/>
            <person name="Miner T.L."/>
            <person name="Nash W.E."/>
            <person name="Cordes M."/>
            <person name="Du H."/>
            <person name="Sun H."/>
            <person name="Edwards J."/>
            <person name="Bradshaw-Cordum H."/>
            <person name="Ali J."/>
            <person name="Andrews S."/>
            <person name="Isak A."/>
            <person name="Vanbrunt A."/>
            <person name="Nguyen C."/>
            <person name="Du F."/>
            <person name="Lamar B."/>
            <person name="Courtney L."/>
            <person name="Kalicki J."/>
            <person name="Ozersky P."/>
            <person name="Bielicki L."/>
            <person name="Scott K."/>
            <person name="Holmes A."/>
            <person name="Harkins R."/>
            <person name="Harris A."/>
            <person name="Strong C.M."/>
            <person name="Hou S."/>
            <person name="Tomlinson C."/>
            <person name="Dauphin-Kohlberg S."/>
            <person name="Kozlowicz-Reilly A."/>
            <person name="Leonard S."/>
            <person name="Rohlfing T."/>
            <person name="Rock S.M."/>
            <person name="Tin-Wollam A.-M."/>
            <person name="Abbott A."/>
            <person name="Minx P."/>
            <person name="Maupin R."/>
            <person name="Strowmatt C."/>
            <person name="Latreille P."/>
            <person name="Miller N."/>
            <person name="Johnson D."/>
            <person name="Murray J."/>
            <person name="Woessner J.P."/>
            <person name="Wendl M.C."/>
            <person name="Yang S.-P."/>
            <person name="Schultz B.R."/>
            <person name="Wallis J.W."/>
            <person name="Spieth J."/>
            <person name="Bieri T.A."/>
            <person name="Nelson J.O."/>
            <person name="Berkowicz N."/>
            <person name="Wohldmann P.E."/>
            <person name="Cook L.L."/>
            <person name="Hickenbotham M.T."/>
            <person name="Eldred J."/>
            <person name="Williams D."/>
            <person name="Bedell J.A."/>
            <person name="Mardis E.R."/>
            <person name="Clifton S.W."/>
            <person name="Chissoe S.L."/>
            <person name="Marra M.A."/>
            <person name="Raymond C."/>
            <person name="Haugen E."/>
            <person name="Gillett W."/>
            <person name="Zhou Y."/>
            <person name="James R."/>
            <person name="Phelps K."/>
            <person name="Iadanoto S."/>
            <person name="Bubb K."/>
            <person name="Simms E."/>
            <person name="Levy R."/>
            <person name="Clendenning J."/>
            <person name="Kaul R."/>
            <person name="Kent W.J."/>
            <person name="Furey T.S."/>
            <person name="Baertsch R.A."/>
            <person name="Brent M.R."/>
            <person name="Keibler E."/>
            <person name="Flicek P."/>
            <person name="Bork P."/>
            <person name="Suyama M."/>
            <person name="Bailey J.A."/>
            <person name="Portnoy M.E."/>
            <person name="Torrents D."/>
            <person name="Chinwalla A.T."/>
            <person name="Gish W.R."/>
            <person name="Eddy S.R."/>
            <person name="McPherson J.D."/>
            <person name="Olson M.V."/>
            <person name="Eichler E.E."/>
            <person name="Green E.D."/>
            <person name="Waterston R.H."/>
            <person name="Wilson R.K."/>
        </authorList>
    </citation>
    <scope>NUCLEOTIDE SEQUENCE [LARGE SCALE GENOMIC DNA]</scope>
</reference>
<reference key="6">
    <citation type="journal article" date="2003" name="Science">
        <title>Human chromosome 7: DNA sequence and biology.</title>
        <authorList>
            <person name="Scherer S.W."/>
            <person name="Cheung J."/>
            <person name="MacDonald J.R."/>
            <person name="Osborne L.R."/>
            <person name="Nakabayashi K."/>
            <person name="Herbrick J.-A."/>
            <person name="Carson A.R."/>
            <person name="Parker-Katiraee L."/>
            <person name="Skaug J."/>
            <person name="Khaja R."/>
            <person name="Zhang J."/>
            <person name="Hudek A.K."/>
            <person name="Li M."/>
            <person name="Haddad M."/>
            <person name="Duggan G.E."/>
            <person name="Fernandez B.A."/>
            <person name="Kanematsu E."/>
            <person name="Gentles S."/>
            <person name="Christopoulos C.C."/>
            <person name="Choufani S."/>
            <person name="Kwasnicka D."/>
            <person name="Zheng X.H."/>
            <person name="Lai Z."/>
            <person name="Nusskern D.R."/>
            <person name="Zhang Q."/>
            <person name="Gu Z."/>
            <person name="Lu F."/>
            <person name="Zeesman S."/>
            <person name="Nowaczyk M.J."/>
            <person name="Teshima I."/>
            <person name="Chitayat D."/>
            <person name="Shuman C."/>
            <person name="Weksberg R."/>
            <person name="Zackai E.H."/>
            <person name="Grebe T.A."/>
            <person name="Cox S.R."/>
            <person name="Kirkpatrick S.J."/>
            <person name="Rahman N."/>
            <person name="Friedman J.M."/>
            <person name="Heng H.H.Q."/>
            <person name="Pelicci P.G."/>
            <person name="Lo-Coco F."/>
            <person name="Belloni E."/>
            <person name="Shaffer L.G."/>
            <person name="Pober B."/>
            <person name="Morton C.C."/>
            <person name="Gusella J.F."/>
            <person name="Bruns G.A.P."/>
            <person name="Korf B.R."/>
            <person name="Quade B.J."/>
            <person name="Ligon A.H."/>
            <person name="Ferguson H."/>
            <person name="Higgins A.W."/>
            <person name="Leach N.T."/>
            <person name="Herrick S.R."/>
            <person name="Lemyre E."/>
            <person name="Farra C.G."/>
            <person name="Kim H.-G."/>
            <person name="Summers A.M."/>
            <person name="Gripp K.W."/>
            <person name="Roberts W."/>
            <person name="Szatmari P."/>
            <person name="Winsor E.J.T."/>
            <person name="Grzeschik K.-H."/>
            <person name="Teebi A."/>
            <person name="Minassian B.A."/>
            <person name="Kere J."/>
            <person name="Armengol L."/>
            <person name="Pujana M.A."/>
            <person name="Estivill X."/>
            <person name="Wilson M.D."/>
            <person name="Koop B.F."/>
            <person name="Tosi S."/>
            <person name="Moore G.E."/>
            <person name="Boright A.P."/>
            <person name="Zlotorynski E."/>
            <person name="Kerem B."/>
            <person name="Kroisel P.M."/>
            <person name="Petek E."/>
            <person name="Oscier D.G."/>
            <person name="Mould S.J."/>
            <person name="Doehner H."/>
            <person name="Doehner K."/>
            <person name="Rommens J.M."/>
            <person name="Vincent J.B."/>
            <person name="Venter J.C."/>
            <person name="Li P.W."/>
            <person name="Mural R.J."/>
            <person name="Adams M.D."/>
            <person name="Tsui L.-C."/>
        </authorList>
    </citation>
    <scope>NUCLEOTIDE SEQUENCE [LARGE SCALE GENOMIC DNA]</scope>
</reference>
<reference key="7">
    <citation type="submission" date="2005-09" db="EMBL/GenBank/DDBJ databases">
        <authorList>
            <person name="Mural R.J."/>
            <person name="Istrail S."/>
            <person name="Sutton G.G."/>
            <person name="Florea L."/>
            <person name="Halpern A.L."/>
            <person name="Mobarry C.M."/>
            <person name="Lippert R."/>
            <person name="Walenz B."/>
            <person name="Shatkay H."/>
            <person name="Dew I."/>
            <person name="Miller J.R."/>
            <person name="Flanigan M.J."/>
            <person name="Edwards N.J."/>
            <person name="Bolanos R."/>
            <person name="Fasulo D."/>
            <person name="Halldorsson B.V."/>
            <person name="Hannenhalli S."/>
            <person name="Turner R."/>
            <person name="Yooseph S."/>
            <person name="Lu F."/>
            <person name="Nusskern D.R."/>
            <person name="Shue B.C."/>
            <person name="Zheng X.H."/>
            <person name="Zhong F."/>
            <person name="Delcher A.L."/>
            <person name="Huson D.H."/>
            <person name="Kravitz S.A."/>
            <person name="Mouchard L."/>
            <person name="Reinert K."/>
            <person name="Remington K.A."/>
            <person name="Clark A.G."/>
            <person name="Waterman M.S."/>
            <person name="Eichler E.E."/>
            <person name="Adams M.D."/>
            <person name="Hunkapiller M.W."/>
            <person name="Myers E.W."/>
            <person name="Venter J.C."/>
        </authorList>
    </citation>
    <scope>NUCLEOTIDE SEQUENCE [LARGE SCALE GENOMIC DNA]</scope>
</reference>
<reference key="8">
    <citation type="journal article" date="2004" name="Genome Res.">
        <title>The status, quality, and expansion of the NIH full-length cDNA project: the Mammalian Gene Collection (MGC).</title>
        <authorList>
            <consortium name="The MGC Project Team"/>
        </authorList>
    </citation>
    <scope>NUCLEOTIDE SEQUENCE [LARGE SCALE MRNA] (ISOFORM 1)</scope>
    <source>
        <tissue>Kidney</tissue>
        <tissue>Spleen</tissue>
    </source>
</reference>
<reference key="9">
    <citation type="journal article" date="1990" name="J. Biol. Chem.">
        <title>Isolation from adult human serum of four insulin-like growth factor (IGF) binding proteins and molecular cloning of one of them that is increased by IGF I administration and in extrapancreatic tumor hypoglycemia.</title>
        <authorList>
            <person name="Zapf J."/>
            <person name="Kiefer M."/>
            <person name="Merryweather J."/>
            <person name="Musiarz F."/>
            <person name="Bauer D."/>
            <person name="Born W."/>
            <person name="Fischer J.A."/>
            <person name="Froesch E.R."/>
        </authorList>
    </citation>
    <scope>PROTEIN SEQUENCE OF 28-65</scope>
</reference>
<reference key="10">
    <citation type="journal article" date="1991" name="Growth Regul.">
        <title>Purification from human cerebrospinal fluid of insulin-like growth factor binding proteins (IGFBPs). Isolation of IGFBP-2, an altered form of IGFBP-3 and a new IGFBP species.</title>
        <authorList>
            <person name="Roghani M."/>
            <person name="Segovia B."/>
            <person name="Whitechurch O."/>
            <person name="Binoux M."/>
        </authorList>
    </citation>
    <scope>PROTEIN SEQUENCE OF 28-45</scope>
    <scope>INTERACTION WITH IGF2</scope>
    <scope>VARIANT GLY-32</scope>
    <source>
        <tissue>Cerebrospinal fluid</tissue>
    </source>
</reference>
<reference key="11">
    <citation type="journal article" date="2004" name="Protein Sci.">
        <title>Signal peptide prediction based on analysis of experimentally verified cleavage sites.</title>
        <authorList>
            <person name="Zhang Z."/>
            <person name="Henzel W.J."/>
        </authorList>
    </citation>
    <scope>PROTEIN SEQUENCE OF 28-42</scope>
</reference>
<reference key="12">
    <citation type="journal article" date="1997" name="J. Biol. Chem.">
        <title>The type V transforming growth factor beta receptor is the putative insulin-like growth factor-binding protein 3 receptor.</title>
        <authorList>
            <person name="Leal S.M."/>
            <person name="Liu Q."/>
            <person name="Huang S.S."/>
            <person name="Huang J.S."/>
        </authorList>
    </citation>
    <scope>FUNCTION</scope>
    <scope>INTERACTION WITH LRP1</scope>
</reference>
<reference key="13">
    <citation type="journal article" date="2000" name="J. Biol. Chem.">
        <title>Direct functional interactions between insulin-like growth factor-binding protein-3 and retinoid X receptor-alpha regulate transcriptional signaling and apoptosis.</title>
        <authorList>
            <person name="Liu B."/>
            <person name="Lee H.Y."/>
            <person name="Weinzimer S.A."/>
            <person name="Powell D.R."/>
            <person name="Clifford J.L."/>
            <person name="Kurie J.M."/>
            <person name="Cohen P."/>
        </authorList>
    </citation>
    <scope>FUNCTION</scope>
    <scope>SUBCELLULAR LOCATION</scope>
    <scope>INTERACTION WITH RXRA</scope>
</reference>
<reference key="14">
    <citation type="journal article" date="2003" name="Proc. Natl. Acad. Sci. U.S.A.">
        <title>Interaction between the Alzheimer's survival peptide humanin and insulin-like growth factor-binding protein 3 regulates cell survival and apoptosis.</title>
        <authorList>
            <person name="Ikonen M."/>
            <person name="Liu B."/>
            <person name="Hashimoto Y."/>
            <person name="Ma L."/>
            <person name="Lee K.W."/>
            <person name="Niikura T."/>
            <person name="Nishimoto I."/>
            <person name="Cohen P."/>
        </authorList>
    </citation>
    <scope>INTERACTION WITH HUMANIN</scope>
</reference>
<reference key="15">
    <citation type="journal article" date="2004" name="FASEB J.">
        <title>Identification of insulin receptor substrate proteins as key molecules for the TbetaR-V/LRP-1-mediated growth inhibitory signaling cascade in epithelial and myeloid cells.</title>
        <authorList>
            <person name="Huang S.S."/>
            <person name="Leal S.M."/>
            <person name="Chen C.L."/>
            <person name="Liu I.H."/>
            <person name="Huang J.S."/>
        </authorList>
    </citation>
    <scope>FUNCTION</scope>
</reference>
<reference key="16">
    <citation type="journal article" date="2004" name="Proteomics">
        <title>Screening for N-glycosylated proteins by liquid chromatography mass spectrometry.</title>
        <authorList>
            <person name="Bunkenborg J."/>
            <person name="Pilch B.J."/>
            <person name="Podtelejnikov A.V."/>
            <person name="Wisniewski J.R."/>
        </authorList>
    </citation>
    <scope>GLYCOSYLATION [LARGE SCALE ANALYSIS] AT ASN-136</scope>
    <source>
        <tissue>Plasma</tissue>
    </source>
</reference>
<reference key="17">
    <citation type="journal article" date="2005" name="J. Proteome Res.">
        <title>Human plasma N-glycoproteome analysis by immunoaffinity subtraction, hydrazide chemistry, and mass spectrometry.</title>
        <authorList>
            <person name="Liu T."/>
            <person name="Qian W.-J."/>
            <person name="Gritsenko M.A."/>
            <person name="Camp D.G. II"/>
            <person name="Monroe M.E."/>
            <person name="Moore R.J."/>
            <person name="Smith R.D."/>
        </authorList>
    </citation>
    <scope>GLYCOSYLATION [LARGE SCALE ANALYSIS] AT ASN-136 AND ASN-199</scope>
    <source>
        <tissue>Plasma</tissue>
    </source>
</reference>
<reference key="18">
    <citation type="journal article" date="2009" name="J. Proteome Res.">
        <title>Glycoproteomics analysis of human liver tissue by combination of multiple enzyme digestion and hydrazide chemistry.</title>
        <authorList>
            <person name="Chen R."/>
            <person name="Jiang X."/>
            <person name="Sun D."/>
            <person name="Han G."/>
            <person name="Wang F."/>
            <person name="Ye M."/>
            <person name="Wang L."/>
            <person name="Zou H."/>
        </authorList>
    </citation>
    <scope>GLYCOSYLATION [LARGE SCALE ANALYSIS] AT ASN-136</scope>
    <source>
        <tissue>Liver</tissue>
    </source>
</reference>
<reference key="19">
    <citation type="journal article" date="2009" name="Mol. Cell. Proteomics">
        <title>A strategy for precise and large scale identification of core fucosylated glycoproteins.</title>
        <authorList>
            <person name="Jia W."/>
            <person name="Lu Z."/>
            <person name="Fu Y."/>
            <person name="Wang H.P."/>
            <person name="Wang L.H."/>
            <person name="Chi H."/>
            <person name="Yuan Z.F."/>
            <person name="Zheng Z.B."/>
            <person name="Song L.N."/>
            <person name="Han H.H."/>
            <person name="Liang Y.M."/>
            <person name="Wang J.L."/>
            <person name="Cai Y."/>
            <person name="Zhang Y.K."/>
            <person name="Deng Y.L."/>
            <person name="Ying W.T."/>
            <person name="He S.M."/>
            <person name="Qian X.H."/>
        </authorList>
    </citation>
    <scope>GLYCOSYLATION AT ASN-116; ASN-136 AND ASN-199</scope>
</reference>
<reference key="20">
    <citation type="journal article" date="2009" name="Mol. Endocrinol.">
        <title>Enhancing the apoptotic potential of insulin-like growth factor-binding protein-3 in prostate cancer by modulation of CK2 phosphorylation.</title>
        <authorList>
            <person name="Cobb L.J."/>
            <person name="Mehta H."/>
            <person name="Cohen P."/>
        </authorList>
    </citation>
    <scope>FUNCTION</scope>
    <scope>PHOSPHORYLATION AT SER-194 AND SER-202</scope>
    <scope>MUTAGENESIS OF SER-194 AND SER-202</scope>
    <scope>SUBCELLULAR LOCATION</scope>
</reference>
<reference key="21">
    <citation type="journal article" date="2010" name="J. Biol. Chem.">
        <title>Identification of a novel cell death receptor mediating IGFBP-3-induced anti-tumor effects in breast and prostate cancer.</title>
        <authorList>
            <person name="Ingermann A.R."/>
            <person name="Yang Y.F."/>
            <person name="Han J."/>
            <person name="Mikami A."/>
            <person name="Garza A.E."/>
            <person name="Mohanraj L."/>
            <person name="Fan L."/>
            <person name="Idowu M."/>
            <person name="Ware J.L."/>
            <person name="Kim H.S."/>
            <person name="Lee D.Y."/>
            <person name="Oh Y."/>
        </authorList>
    </citation>
    <scope>FUNCTION</scope>
    <scope>SUBCELLULAR LOCATION</scope>
    <scope>INTERACTION WITH TMEM219</scope>
</reference>
<reference key="22">
    <citation type="journal article" date="2015" name="Cell">
        <title>A single kinase generates the majority of the secreted phosphoproteome.</title>
        <authorList>
            <person name="Tagliabracci V.S."/>
            <person name="Wiley S.E."/>
            <person name="Guo X."/>
            <person name="Kinch L.N."/>
            <person name="Durrant E."/>
            <person name="Wen J."/>
            <person name="Xiao J."/>
            <person name="Cui J."/>
            <person name="Nguyen K.B."/>
            <person name="Engel J.L."/>
            <person name="Coon J.J."/>
            <person name="Grishin N."/>
            <person name="Pinna L.A."/>
            <person name="Pagliarini D.J."/>
            <person name="Dixon J.E."/>
        </authorList>
    </citation>
    <scope>PHOSPHORYLATION AT SER-148 AND SER-201</scope>
</reference>
<reference key="23">
    <citation type="journal article" date="2006" name="Science">
        <title>The consensus coding sequences of human breast and colorectal cancers.</title>
        <authorList>
            <person name="Sjoeblom T."/>
            <person name="Jones S."/>
            <person name="Wood L.D."/>
            <person name="Parsons D.W."/>
            <person name="Lin J."/>
            <person name="Barber T.D."/>
            <person name="Mandelker D."/>
            <person name="Leary R.J."/>
            <person name="Ptak J."/>
            <person name="Silliman N."/>
            <person name="Szabo S."/>
            <person name="Buckhaults P."/>
            <person name="Farrell C."/>
            <person name="Meeh P."/>
            <person name="Markowitz S.D."/>
            <person name="Willis J."/>
            <person name="Dawson D."/>
            <person name="Willson J.K.V."/>
            <person name="Gazdar A.F."/>
            <person name="Hartigan J."/>
            <person name="Wu L."/>
            <person name="Liu C."/>
            <person name="Parmigiani G."/>
            <person name="Park B.H."/>
            <person name="Bachman K.E."/>
            <person name="Papadopoulos N."/>
            <person name="Vogelstein B."/>
            <person name="Kinzler K.W."/>
            <person name="Velculescu V.E."/>
        </authorList>
    </citation>
    <scope>VARIANTS [LARGE SCALE ANALYSIS] MET-7 AND CYS-252</scope>
</reference>
<reference key="24">
    <citation type="journal article" date="2009" name="PLoS ONE">
        <title>Humanin: a novel central regulator of peripheral insulin action.</title>
        <authorList>
            <person name="Muzumdar R.H."/>
            <person name="Huffman D.M."/>
            <person name="Atzmon G."/>
            <person name="Buettner C."/>
            <person name="Cobb L.J."/>
            <person name="Fishman S."/>
            <person name="Budagov T."/>
            <person name="Cui L."/>
            <person name="Einstein F.H."/>
            <person name="Poduval A."/>
            <person name="Hwang D."/>
            <person name="Barzilai N."/>
            <person name="Cohen P."/>
        </authorList>
    </citation>
    <scope>FUNCTION</scope>
    <scope>INTERACTION WITH HUMANIN</scope>
</reference>
<reference key="25">
    <citation type="journal article" date="2010" name="Endocrinology">
        <title>Opposing roles of insulin-like growth factor binding protein 3 and humanin in the regulation of testicular germ cell apoptosis.</title>
        <authorList>
            <person name="Lue Y."/>
            <person name="Swerdloff R."/>
            <person name="Liu Q."/>
            <person name="Mehta H."/>
            <person name="Hikim A.S."/>
            <person name="Lee K.W."/>
            <person name="Jia Y."/>
            <person name="Hwang D."/>
            <person name="Cobb L.J."/>
            <person name="Cohen P."/>
            <person name="Wang C."/>
        </authorList>
    </citation>
    <scope>FUNCTION</scope>
</reference>
<reference key="26">
    <citation type="journal article" date="2015" name="Protein Pept. Lett.">
        <title>Humanin Peptide Binds to Insulin-Like Growth Factor-Binding Protein 3 (IGFBP3) and Regulates Its Interaction with Importin-beta.</title>
        <authorList>
            <person name="Njomen E."/>
            <person name="Evans H.G."/>
            <person name="Gedara S.H."/>
            <person name="Heyl D.L."/>
        </authorList>
    </citation>
    <scope>INTERACTION WITH HUMANIN</scope>
</reference>
<reference evidence="29" key="27">
    <citation type="journal article" date="2022" name="Nat. Commun.">
        <title>Structural basis for assembly and disassembly of the IGF/IGFBP/ALS ternary complex.</title>
        <authorList>
            <person name="Kim H."/>
            <person name="Fu Y."/>
            <person name="Hong H.J."/>
            <person name="Lee S.G."/>
            <person name="Lee D.S."/>
            <person name="Kim H.M."/>
        </authorList>
    </citation>
    <scope>STRUCTURE BY ELECTRON MICROSCOPY (3.60 ANGSTROMS) OF 28-291</scope>
    <scope>INTERACTION WITH IGF1 AND ALS</scope>
    <scope>DISULFIDE BOND</scope>
    <scope>MUTAGENESIS OF ARG-215</scope>
</reference>
<feature type="signal peptide" evidence="9 14 15">
    <location>
        <begin position="1"/>
        <end position="27"/>
    </location>
</feature>
<feature type="chain" id="PRO_0000014378" description="Insulin-like growth factor-binding protein 3">
    <location>
        <begin position="28"/>
        <end position="291"/>
    </location>
</feature>
<feature type="domain" description="IGFBP N-terminal" evidence="4">
    <location>
        <begin position="36"/>
        <end position="117"/>
    </location>
</feature>
<feature type="domain" description="Thyroglobulin type-1" evidence="3">
    <location>
        <begin position="210"/>
        <end position="285"/>
    </location>
</feature>
<feature type="region of interest" description="IGF-binding" evidence="2">
    <location>
        <begin position="28"/>
        <end position="134"/>
    </location>
</feature>
<feature type="region of interest" description="Disordered" evidence="5">
    <location>
        <begin position="130"/>
        <end position="162"/>
    </location>
</feature>
<feature type="region of interest" description="Disordered" evidence="5">
    <location>
        <begin position="189"/>
        <end position="211"/>
    </location>
</feature>
<feature type="compositionally biased region" description="Low complexity" evidence="5">
    <location>
        <begin position="146"/>
        <end position="156"/>
    </location>
</feature>
<feature type="compositionally biased region" description="Polar residues" evidence="5">
    <location>
        <begin position="191"/>
        <end position="202"/>
    </location>
</feature>
<feature type="modified residue" description="Phosphoserine; by FAM20C" evidence="23">
    <location>
        <position position="148"/>
    </location>
</feature>
<feature type="modified residue" description="Phosphoserine; by CK2" evidence="18">
    <location>
        <position position="194"/>
    </location>
</feature>
<feature type="modified residue" description="Phosphoserine; by FAM20C" evidence="23">
    <location>
        <position position="201"/>
    </location>
</feature>
<feature type="modified residue" description="Phosphoserine; by CK2" evidence="18">
    <location>
        <position position="202"/>
    </location>
</feature>
<feature type="glycosylation site" description="N-linked (GlcNAc...) (complex) asparagine" evidence="16">
    <location>
        <position position="116"/>
    </location>
</feature>
<feature type="glycosylation site" description="N-linked (GlcNAc...) (complex) asparagine" evidence="8 11 16 17">
    <location>
        <position position="136"/>
    </location>
</feature>
<feature type="glycosylation site" description="N-linked (GlcNAc...) (complex) asparagine" evidence="11 16">
    <location>
        <position position="199"/>
    </location>
</feature>
<feature type="disulfide bond" evidence="25 29">
    <location>
        <begin position="40"/>
        <end position="67"/>
    </location>
</feature>
<feature type="disulfide bond" evidence="25 29">
    <location>
        <begin position="43"/>
        <end position="69"/>
    </location>
</feature>
<feature type="disulfide bond" evidence="25 29">
    <location>
        <begin position="51"/>
        <end position="70"/>
    </location>
</feature>
<feature type="disulfide bond" evidence="25 29">
    <location>
        <begin position="58"/>
        <end position="73"/>
    </location>
</feature>
<feature type="disulfide bond" evidence="25 29">
    <location>
        <begin position="81"/>
        <end position="94"/>
    </location>
</feature>
<feature type="disulfide bond" evidence="25 29">
    <location>
        <begin position="88"/>
        <end position="114"/>
    </location>
</feature>
<feature type="disulfide bond" evidence="25 29">
    <location>
        <begin position="213"/>
        <end position="240"/>
    </location>
</feature>
<feature type="disulfide bond" evidence="25 29">
    <location>
        <begin position="251"/>
        <end position="262"/>
    </location>
</feature>
<feature type="disulfide bond" evidence="25 29">
    <location>
        <begin position="264"/>
        <end position="285"/>
    </location>
</feature>
<feature type="splice variant" id="VSP_047293" description="In isoform 2." evidence="28">
    <original>G</original>
    <variation>GEPPAPG</variation>
    <location>
        <position position="135"/>
    </location>
</feature>
<feature type="sequence variant" id="VAR_036279" description="In a colorectal cancer sample; somatic mutation; dbSNP:rs754430221." evidence="13">
    <original>T</original>
    <variation>M</variation>
    <location>
        <position position="7"/>
    </location>
</feature>
<feature type="sequence variant" id="VAR_025262" description="In dbSNP:rs2854746." evidence="12 15 22 26">
    <original>A</original>
    <variation>G</variation>
    <location>
        <position position="32"/>
    </location>
</feature>
<feature type="sequence variant" id="VAR_025263" description="In dbSNP:rs34257987." evidence="27">
    <original>A</original>
    <variation>T</variation>
    <location>
        <position position="56"/>
    </location>
</feature>
<feature type="sequence variant" id="VAR_021974" description="In dbSNP:rs9282734.">
    <original>H</original>
    <variation>P</variation>
    <location>
        <position position="158"/>
    </location>
</feature>
<feature type="sequence variant" id="VAR_025264" description="In dbSNP:rs35712717." evidence="27">
    <original>G</original>
    <variation>S</variation>
    <location>
        <position position="234"/>
    </location>
</feature>
<feature type="sequence variant" id="VAR_036280" description="In a colorectal cancer sample; somatic mutation; dbSNP:rs538312081." evidence="13">
    <original>R</original>
    <variation>C</variation>
    <location>
        <position position="252"/>
    </location>
</feature>
<feature type="mutagenesis site" description="Strongly enhanced apoptotic potential." evidence="18">
    <original>S</original>
    <variation>A</variation>
    <location>
        <position position="194"/>
    </location>
</feature>
<feature type="mutagenesis site" description="No change in apoptotic potential." evidence="18">
    <original>S</original>
    <variation>A</variation>
    <location>
        <position position="202"/>
    </location>
</feature>
<feature type="mutagenesis site" description="Completely abolished ALS binding." evidence="25">
    <original>R</original>
    <variation>E</variation>
    <location>
        <position position="215"/>
    </location>
</feature>
<comment type="function">
    <text evidence="6 10 17 18 19 20 21">Multifunctional protein that plays a critical role in regulating the availability of IGFs such as IGF1 and IGF2 to their receptors and thereby regulates IGF-mediated cellular processes including proliferation, differentiation, and apoptosis in a cell-type specific manner (PubMed:10874028, PubMed:19556345). Also exhibits IGF-independent antiproliferative and apoptotic effects mediated by its receptor TMEM219/IGFBP-3R (PubMed:20353938). Inhibits the positive effect of humanin on insulin sensitivity (PubMed:19623253). Promotes testicular germ cell apoptosis (PubMed:19952275). Acts via LRP-1/alpha2M receptor, also known as TGF-beta type V receptor, to mediate cell growth inhibition independent of IGF1 (PubMed:9252371). Mechanistically, induces serine-specific dephosphorylation of IRS1 or IRS2 upon ligation to its receptor, leading to the inhibitory cascade (PubMed:15371331). In the nucleus, interacts with transcription factors such as retinoid X receptor-alpha/RXRA to regulate transcriptional signaling and apoptosis (PubMed:10874028).</text>
</comment>
<comment type="subunit">
    <text evidence="1 6 7 15 19 21 24 25">Interacts with XLKD1 (By similarity). Binds IGF2 more than IGF1. Forms a ternary complex of about 140 to 150 kDa with IGF1 or IGF2 and a 85 kDa glycoprotein (ALS) (PubMed:35907924). Interacts with humanin; humanin competes with importin KPNB1 for binding to IGFBP3, blocking IGFBP3 nuclear import and IGFBP3-mediated apoptosis (PubMed:14561895, PubMed:19623253, PubMed:26216267). Interacts with TMEM219. Interacts with RXRA; this interaction modulates the transcriptional activity of RXRA (PubMed:10874028). Interacts with LRP1; this interaction mediates cell growth inhibition independent of IGF1 (PubMed:9252371).</text>
</comment>
<comment type="interaction">
    <interactant intactId="EBI-715709">
        <id>P17936</id>
    </interactant>
    <interactant intactId="EBI-297353">
        <id>P00533</id>
        <label>EGFR</label>
    </interactant>
    <organismsDiffer>false</organismsDiffer>
    <experiments>3</experiments>
</comment>
<comment type="interaction">
    <interactant intactId="EBI-715709">
        <id>P17936</id>
    </interactant>
    <interactant intactId="EBI-399080">
        <id>Q92993</id>
        <label>KAT5</label>
    </interactant>
    <organismsDiffer>false</organismsDiffer>
    <experiments>3</experiments>
</comment>
<comment type="interaction">
    <interactant intactId="EBI-715709">
        <id>P17936</id>
    </interactant>
    <interactant intactId="EBI-11742507">
        <id>Q8TAP4-4</id>
        <label>LMO3</label>
    </interactant>
    <organismsDiffer>false</organismsDiffer>
    <experiments>3</experiments>
</comment>
<comment type="interaction">
    <interactant intactId="EBI-715709">
        <id>P17936</id>
    </interactant>
    <interactant intactId="EBI-8643752">
        <id>Q8IVG9</id>
        <label>MT-RNR2</label>
    </interactant>
    <organismsDiffer>false</organismsDiffer>
    <experiments>7</experiments>
</comment>
<comment type="interaction">
    <interactant intactId="EBI-715709">
        <id>P17936</id>
    </interactant>
    <interactant intactId="EBI-1383528">
        <id>P17252</id>
        <label>PRKCA</label>
    </interactant>
    <organismsDiffer>false</organismsDiffer>
    <experiments>3</experiments>
</comment>
<comment type="interaction">
    <interactant intactId="EBI-715709">
        <id>P17936</id>
    </interactant>
    <interactant intactId="EBI-9090795">
        <id>Q15047-2</id>
        <label>SETDB1</label>
    </interactant>
    <organismsDiffer>false</organismsDiffer>
    <experiments>3</experiments>
</comment>
<comment type="interaction">
    <interactant intactId="EBI-715709">
        <id>P17936</id>
    </interactant>
    <interactant intactId="EBI-20264080">
        <id>Q86XT9</id>
        <label>TMEM219</label>
    </interactant>
    <organismsDiffer>false</organismsDiffer>
    <experiments>8</experiments>
</comment>
<comment type="interaction">
    <interactant intactId="EBI-715709">
        <id>P17936</id>
    </interactant>
    <interactant intactId="EBI-359832">
        <id>P61981</id>
        <label>YWHAG</label>
    </interactant>
    <organismsDiffer>false</organismsDiffer>
    <experiments>3</experiments>
</comment>
<comment type="subcellular location">
    <subcellularLocation>
        <location evidence="21">Secreted</location>
    </subcellularLocation>
    <subcellularLocation>
        <location evidence="6 18">Nucleus</location>
    </subcellularLocation>
</comment>
<comment type="alternative products">
    <event type="alternative splicing"/>
    <isoform>
        <id>P17936-1</id>
        <name>1</name>
        <sequence type="displayed"/>
    </isoform>
    <isoform>
        <id>P17936-2</id>
        <name>2</name>
        <sequence type="described" ref="VSP_047293"/>
    </isoform>
</comment>
<comment type="tissue specificity">
    <text>Expressed by most tissues. Present in plasma.</text>
</comment>
<comment type="developmental stage">
    <text>IGFBP3 levels are higher during extrauterine life and peak during puberty.</text>
</comment>
<comment type="induction">
    <text>Up-regulated in the presence of IGF1, insulin and other growth-stimulating factors such as growth hormone, EGF and phorbol esters.</text>
</comment>
<comment type="domain">
    <text>The thyroglobulin type-1 domain mediates interaction with HN.</text>
</comment>
<comment type="PTM">
    <text evidence="18 23">Phosphorylated by FAM20C in the extracellular medium. Phosphorylated by CK2; resulting in decreased nuclear localization (PubMed:19556345).</text>
</comment>
<proteinExistence type="evidence at protein level"/>
<name>IBP3_HUMAN</name>
<protein>
    <recommendedName>
        <fullName>Insulin-like growth factor-binding protein 3</fullName>
        <shortName>IBP-3</shortName>
        <shortName>IGF-binding protein 3</shortName>
        <shortName>IGFBP-3</shortName>
    </recommendedName>
</protein>
<accession>P17936</accession>
<accession>A4D2F5</accession>
<accession>D3DVM0</accession>
<accession>Q2V509</accession>
<accession>Q6P1M6</accession>
<accession>Q9UCL4</accession>